<dbReference type="EMBL" id="CP000539">
    <property type="protein sequence ID" value="ABM41681.1"/>
    <property type="molecule type" value="Genomic_DNA"/>
</dbReference>
<dbReference type="STRING" id="232721.Ajs_1473"/>
<dbReference type="KEGG" id="ajs:Ajs_1473"/>
<dbReference type="eggNOG" id="COG1742">
    <property type="taxonomic scope" value="Bacteria"/>
</dbReference>
<dbReference type="HOGENOM" id="CLU_117653_2_0_4"/>
<dbReference type="Proteomes" id="UP000000645">
    <property type="component" value="Chromosome"/>
</dbReference>
<dbReference type="GO" id="GO:0005886">
    <property type="term" value="C:plasma membrane"/>
    <property type="evidence" value="ECO:0007669"/>
    <property type="project" value="UniProtKB-SubCell"/>
</dbReference>
<dbReference type="HAMAP" id="MF_00010">
    <property type="entry name" value="UPF0060"/>
    <property type="match status" value="1"/>
</dbReference>
<dbReference type="InterPro" id="IPR003844">
    <property type="entry name" value="UPF0060"/>
</dbReference>
<dbReference type="NCBIfam" id="NF002586">
    <property type="entry name" value="PRK02237.1"/>
    <property type="match status" value="1"/>
</dbReference>
<dbReference type="PANTHER" id="PTHR36116">
    <property type="entry name" value="UPF0060 MEMBRANE PROTEIN YNFA"/>
    <property type="match status" value="1"/>
</dbReference>
<dbReference type="PANTHER" id="PTHR36116:SF1">
    <property type="entry name" value="UPF0060 MEMBRANE PROTEIN YNFA"/>
    <property type="match status" value="1"/>
</dbReference>
<dbReference type="Pfam" id="PF02694">
    <property type="entry name" value="UPF0060"/>
    <property type="match status" value="1"/>
</dbReference>
<dbReference type="SUPFAM" id="SSF103481">
    <property type="entry name" value="Multidrug resistance efflux transporter EmrE"/>
    <property type="match status" value="1"/>
</dbReference>
<gene>
    <name type="ordered locus">Ajs_1473</name>
</gene>
<accession>A1W606</accession>
<name>Y1473_ACISJ</name>
<reference key="1">
    <citation type="submission" date="2006-12" db="EMBL/GenBank/DDBJ databases">
        <title>Complete sequence of chromosome 1 of Acidovorax sp. JS42.</title>
        <authorList>
            <person name="Copeland A."/>
            <person name="Lucas S."/>
            <person name="Lapidus A."/>
            <person name="Barry K."/>
            <person name="Detter J.C."/>
            <person name="Glavina del Rio T."/>
            <person name="Dalin E."/>
            <person name="Tice H."/>
            <person name="Pitluck S."/>
            <person name="Chertkov O."/>
            <person name="Brettin T."/>
            <person name="Bruce D."/>
            <person name="Han C."/>
            <person name="Tapia R."/>
            <person name="Gilna P."/>
            <person name="Schmutz J."/>
            <person name="Larimer F."/>
            <person name="Land M."/>
            <person name="Hauser L."/>
            <person name="Kyrpides N."/>
            <person name="Kim E."/>
            <person name="Stahl D."/>
            <person name="Richardson P."/>
        </authorList>
    </citation>
    <scope>NUCLEOTIDE SEQUENCE [LARGE SCALE GENOMIC DNA]</scope>
    <source>
        <strain>JS42</strain>
    </source>
</reference>
<sequence>MELLKVAILFAVTAVAEIVGCYLPWLVVKQGKSAWLLLPAAVSLSLFAWLLTLHPTAAGRTYAAYGGMYIAVALVWLHVVDGVALTRWDFVGAAIALAGMSVIALQPATDT</sequence>
<proteinExistence type="inferred from homology"/>
<protein>
    <recommendedName>
        <fullName evidence="1">UPF0060 membrane protein Ajs_1473</fullName>
    </recommendedName>
</protein>
<organism>
    <name type="scientific">Acidovorax sp. (strain JS42)</name>
    <dbReference type="NCBI Taxonomy" id="232721"/>
    <lineage>
        <taxon>Bacteria</taxon>
        <taxon>Pseudomonadati</taxon>
        <taxon>Pseudomonadota</taxon>
        <taxon>Betaproteobacteria</taxon>
        <taxon>Burkholderiales</taxon>
        <taxon>Comamonadaceae</taxon>
        <taxon>Acidovorax</taxon>
    </lineage>
</organism>
<comment type="subcellular location">
    <subcellularLocation>
        <location evidence="1">Cell inner membrane</location>
        <topology evidence="1">Multi-pass membrane protein</topology>
    </subcellularLocation>
</comment>
<comment type="similarity">
    <text evidence="1">Belongs to the UPF0060 family.</text>
</comment>
<keyword id="KW-0997">Cell inner membrane</keyword>
<keyword id="KW-1003">Cell membrane</keyword>
<keyword id="KW-0472">Membrane</keyword>
<keyword id="KW-0812">Transmembrane</keyword>
<keyword id="KW-1133">Transmembrane helix</keyword>
<feature type="chain" id="PRO_0000282199" description="UPF0060 membrane protein Ajs_1473">
    <location>
        <begin position="1"/>
        <end position="111"/>
    </location>
</feature>
<feature type="transmembrane region" description="Helical" evidence="1">
    <location>
        <begin position="8"/>
        <end position="28"/>
    </location>
</feature>
<feature type="transmembrane region" description="Helical" evidence="1">
    <location>
        <begin position="33"/>
        <end position="53"/>
    </location>
</feature>
<feature type="transmembrane region" description="Helical" evidence="1">
    <location>
        <begin position="65"/>
        <end position="85"/>
    </location>
</feature>
<feature type="transmembrane region" description="Helical" evidence="1">
    <location>
        <begin position="88"/>
        <end position="108"/>
    </location>
</feature>
<evidence type="ECO:0000255" key="1">
    <source>
        <dbReference type="HAMAP-Rule" id="MF_00010"/>
    </source>
</evidence>